<dbReference type="EC" id="2.2.1.7" evidence="1"/>
<dbReference type="EMBL" id="CP001146">
    <property type="protein sequence ID" value="ACI19059.1"/>
    <property type="molecule type" value="Genomic_DNA"/>
</dbReference>
<dbReference type="RefSeq" id="WP_012547691.1">
    <property type="nucleotide sequence ID" value="NC_011297.1"/>
</dbReference>
<dbReference type="SMR" id="B5YE06"/>
<dbReference type="STRING" id="309799.DICTH_0902"/>
<dbReference type="PaxDb" id="309799-DICTH_0902"/>
<dbReference type="KEGG" id="dth:DICTH_0902"/>
<dbReference type="eggNOG" id="COG1154">
    <property type="taxonomic scope" value="Bacteria"/>
</dbReference>
<dbReference type="HOGENOM" id="CLU_009227_1_4_0"/>
<dbReference type="OrthoDB" id="9803371at2"/>
<dbReference type="UniPathway" id="UPA00064">
    <property type="reaction ID" value="UER00091"/>
</dbReference>
<dbReference type="Proteomes" id="UP000001733">
    <property type="component" value="Chromosome"/>
</dbReference>
<dbReference type="GO" id="GO:0005829">
    <property type="term" value="C:cytosol"/>
    <property type="evidence" value="ECO:0007669"/>
    <property type="project" value="TreeGrafter"/>
</dbReference>
<dbReference type="GO" id="GO:0008661">
    <property type="term" value="F:1-deoxy-D-xylulose-5-phosphate synthase activity"/>
    <property type="evidence" value="ECO:0007669"/>
    <property type="project" value="UniProtKB-UniRule"/>
</dbReference>
<dbReference type="GO" id="GO:0000287">
    <property type="term" value="F:magnesium ion binding"/>
    <property type="evidence" value="ECO:0007669"/>
    <property type="project" value="UniProtKB-UniRule"/>
</dbReference>
<dbReference type="GO" id="GO:0030976">
    <property type="term" value="F:thiamine pyrophosphate binding"/>
    <property type="evidence" value="ECO:0007669"/>
    <property type="project" value="UniProtKB-UniRule"/>
</dbReference>
<dbReference type="GO" id="GO:0052865">
    <property type="term" value="P:1-deoxy-D-xylulose 5-phosphate biosynthetic process"/>
    <property type="evidence" value="ECO:0007669"/>
    <property type="project" value="UniProtKB-UniPathway"/>
</dbReference>
<dbReference type="GO" id="GO:0019288">
    <property type="term" value="P:isopentenyl diphosphate biosynthetic process, methylerythritol 4-phosphate pathway"/>
    <property type="evidence" value="ECO:0007669"/>
    <property type="project" value="TreeGrafter"/>
</dbReference>
<dbReference type="GO" id="GO:0016114">
    <property type="term" value="P:terpenoid biosynthetic process"/>
    <property type="evidence" value="ECO:0007669"/>
    <property type="project" value="UniProtKB-UniRule"/>
</dbReference>
<dbReference type="GO" id="GO:0009228">
    <property type="term" value="P:thiamine biosynthetic process"/>
    <property type="evidence" value="ECO:0007669"/>
    <property type="project" value="UniProtKB-UniRule"/>
</dbReference>
<dbReference type="CDD" id="cd02007">
    <property type="entry name" value="TPP_DXS"/>
    <property type="match status" value="1"/>
</dbReference>
<dbReference type="CDD" id="cd07033">
    <property type="entry name" value="TPP_PYR_DXS_TK_like"/>
    <property type="match status" value="1"/>
</dbReference>
<dbReference type="FunFam" id="3.40.50.920:FF:000002">
    <property type="entry name" value="1-deoxy-D-xylulose-5-phosphate synthase"/>
    <property type="match status" value="1"/>
</dbReference>
<dbReference type="FunFam" id="3.40.50.970:FF:000005">
    <property type="entry name" value="1-deoxy-D-xylulose-5-phosphate synthase"/>
    <property type="match status" value="1"/>
</dbReference>
<dbReference type="Gene3D" id="3.40.50.920">
    <property type="match status" value="1"/>
</dbReference>
<dbReference type="Gene3D" id="3.40.50.970">
    <property type="match status" value="2"/>
</dbReference>
<dbReference type="HAMAP" id="MF_00315">
    <property type="entry name" value="DXP_synth"/>
    <property type="match status" value="1"/>
</dbReference>
<dbReference type="InterPro" id="IPR005477">
    <property type="entry name" value="Dxylulose-5-P_synthase"/>
</dbReference>
<dbReference type="InterPro" id="IPR029061">
    <property type="entry name" value="THDP-binding"/>
</dbReference>
<dbReference type="InterPro" id="IPR009014">
    <property type="entry name" value="Transketo_C/PFOR_II"/>
</dbReference>
<dbReference type="InterPro" id="IPR005475">
    <property type="entry name" value="Transketolase-like_Pyr-bd"/>
</dbReference>
<dbReference type="InterPro" id="IPR033248">
    <property type="entry name" value="Transketolase_C"/>
</dbReference>
<dbReference type="InterPro" id="IPR049557">
    <property type="entry name" value="Transketolase_CS"/>
</dbReference>
<dbReference type="NCBIfam" id="TIGR00204">
    <property type="entry name" value="dxs"/>
    <property type="match status" value="1"/>
</dbReference>
<dbReference type="NCBIfam" id="NF003933">
    <property type="entry name" value="PRK05444.2-2"/>
    <property type="match status" value="1"/>
</dbReference>
<dbReference type="PANTHER" id="PTHR43322">
    <property type="entry name" value="1-D-DEOXYXYLULOSE 5-PHOSPHATE SYNTHASE-RELATED"/>
    <property type="match status" value="1"/>
</dbReference>
<dbReference type="PANTHER" id="PTHR43322:SF5">
    <property type="entry name" value="1-DEOXY-D-XYLULOSE-5-PHOSPHATE SYNTHASE, CHLOROPLASTIC"/>
    <property type="match status" value="1"/>
</dbReference>
<dbReference type="Pfam" id="PF13292">
    <property type="entry name" value="DXP_synthase_N"/>
    <property type="match status" value="1"/>
</dbReference>
<dbReference type="Pfam" id="PF02779">
    <property type="entry name" value="Transket_pyr"/>
    <property type="match status" value="1"/>
</dbReference>
<dbReference type="Pfam" id="PF02780">
    <property type="entry name" value="Transketolase_C"/>
    <property type="match status" value="1"/>
</dbReference>
<dbReference type="SMART" id="SM00861">
    <property type="entry name" value="Transket_pyr"/>
    <property type="match status" value="1"/>
</dbReference>
<dbReference type="SUPFAM" id="SSF52518">
    <property type="entry name" value="Thiamin diphosphate-binding fold (THDP-binding)"/>
    <property type="match status" value="2"/>
</dbReference>
<dbReference type="SUPFAM" id="SSF52922">
    <property type="entry name" value="TK C-terminal domain-like"/>
    <property type="match status" value="1"/>
</dbReference>
<dbReference type="PROSITE" id="PS00801">
    <property type="entry name" value="TRANSKETOLASE_1"/>
    <property type="match status" value="1"/>
</dbReference>
<sequence>MLLQKINSPKDLKRLSIDELKTLSAEIREIIINTVENNGGHLASNLGTVELTLALHYVFDTPEDKIIWDVGHQAYTHKLVTGRAKDFHTLRQFGGISGYIAPWESEYDHFAVGHAGTSLSAALGFAKARDLKGEKYKVIAVIGDGALTSGMALEALNQIGYLNTDLIVVLNDNEHSISPNVGAIALYLAKLRKHPLYRFFKQTTQNLLKNSSIGKGLLAFDLKLERSLKSLLLENPMFEYWGFKYFGPFDGHDIPVLISVFKGIKDNLSCPVLIHITTKKGIGHKDAEATPSKFHSIGAKIEREKKVPTYTEVFGKALVELGEKYPEIVAITAAMPEGTGLSYFAQRFPERFFDVGIAEEHAVTFAAGLAKNGLKPVVAIYSTFLQRAFDQIIHDVCLQKLPIVFVLDRAGIVSDDGPTHQGIFDLSYLRLIPNMVISAPKDESELRDLLYTAINYPGPFAIRYPKSKGVGIGLKDHFERIEIGKSEILKYGKNVLILAIGSMVYPALEAESILKTEGISPTIVNVRFLKPLDVLTLEELISSHDVIITVEENVITGGLFGAISELVNILKLNKKVLPISLPDKFIEQGNAQLLRDIYGLSGHKIAEKIISVLEDVKV</sequence>
<comment type="function">
    <text evidence="1">Catalyzes the acyloin condensation reaction between C atoms 2 and 3 of pyruvate and glyceraldehyde 3-phosphate to yield 1-deoxy-D-xylulose-5-phosphate (DXP).</text>
</comment>
<comment type="catalytic activity">
    <reaction evidence="1">
        <text>D-glyceraldehyde 3-phosphate + pyruvate + H(+) = 1-deoxy-D-xylulose 5-phosphate + CO2</text>
        <dbReference type="Rhea" id="RHEA:12605"/>
        <dbReference type="ChEBI" id="CHEBI:15361"/>
        <dbReference type="ChEBI" id="CHEBI:15378"/>
        <dbReference type="ChEBI" id="CHEBI:16526"/>
        <dbReference type="ChEBI" id="CHEBI:57792"/>
        <dbReference type="ChEBI" id="CHEBI:59776"/>
        <dbReference type="EC" id="2.2.1.7"/>
    </reaction>
</comment>
<comment type="cofactor">
    <cofactor evidence="1">
        <name>Mg(2+)</name>
        <dbReference type="ChEBI" id="CHEBI:18420"/>
    </cofactor>
    <text evidence="1">Binds 1 Mg(2+) ion per subunit.</text>
</comment>
<comment type="cofactor">
    <cofactor evidence="1">
        <name>thiamine diphosphate</name>
        <dbReference type="ChEBI" id="CHEBI:58937"/>
    </cofactor>
    <text evidence="1">Binds 1 thiamine pyrophosphate per subunit.</text>
</comment>
<comment type="pathway">
    <text evidence="1">Metabolic intermediate biosynthesis; 1-deoxy-D-xylulose 5-phosphate biosynthesis; 1-deoxy-D-xylulose 5-phosphate from D-glyceraldehyde 3-phosphate and pyruvate: step 1/1.</text>
</comment>
<comment type="subunit">
    <text evidence="1">Homodimer.</text>
</comment>
<comment type="similarity">
    <text evidence="1">Belongs to the transketolase family. DXPS subfamily.</text>
</comment>
<reference key="1">
    <citation type="journal article" date="2014" name="Genome Announc.">
        <title>Complete Genome Sequence of the Extreme Thermophile Dictyoglomus thermophilum H-6-12.</title>
        <authorList>
            <person name="Coil D.A."/>
            <person name="Badger J.H."/>
            <person name="Forberger H.C."/>
            <person name="Riggs F."/>
            <person name="Madupu R."/>
            <person name="Fedorova N."/>
            <person name="Ward N."/>
            <person name="Robb F.T."/>
            <person name="Eisen J.A."/>
        </authorList>
    </citation>
    <scope>NUCLEOTIDE SEQUENCE [LARGE SCALE GENOMIC DNA]</scope>
    <source>
        <strain>ATCC 35947 / DSM 3960 / H-6-12</strain>
    </source>
</reference>
<keyword id="KW-0414">Isoprene biosynthesis</keyword>
<keyword id="KW-0460">Magnesium</keyword>
<keyword id="KW-0479">Metal-binding</keyword>
<keyword id="KW-0784">Thiamine biosynthesis</keyword>
<keyword id="KW-0786">Thiamine pyrophosphate</keyword>
<keyword id="KW-0808">Transferase</keyword>
<gene>
    <name evidence="1" type="primary">dxs</name>
    <name type="ordered locus">DICTH_0902</name>
</gene>
<protein>
    <recommendedName>
        <fullName evidence="1">1-deoxy-D-xylulose-5-phosphate synthase</fullName>
        <ecNumber evidence="1">2.2.1.7</ecNumber>
    </recommendedName>
    <alternativeName>
        <fullName evidence="1">1-deoxyxylulose-5-phosphate synthase</fullName>
        <shortName evidence="1">DXP synthase</shortName>
        <shortName evidence="1">DXPS</shortName>
    </alternativeName>
</protein>
<feature type="chain" id="PRO_1000115737" description="1-deoxy-D-xylulose-5-phosphate synthase">
    <location>
        <begin position="1"/>
        <end position="618"/>
    </location>
</feature>
<feature type="binding site" evidence="1">
    <location>
        <position position="72"/>
    </location>
    <ligand>
        <name>thiamine diphosphate</name>
        <dbReference type="ChEBI" id="CHEBI:58937"/>
    </ligand>
</feature>
<feature type="binding site" evidence="1">
    <location>
        <begin position="113"/>
        <end position="115"/>
    </location>
    <ligand>
        <name>thiamine diphosphate</name>
        <dbReference type="ChEBI" id="CHEBI:58937"/>
    </ligand>
</feature>
<feature type="binding site" evidence="1">
    <location>
        <position position="144"/>
    </location>
    <ligand>
        <name>Mg(2+)</name>
        <dbReference type="ChEBI" id="CHEBI:18420"/>
    </ligand>
</feature>
<feature type="binding site" evidence="1">
    <location>
        <begin position="145"/>
        <end position="146"/>
    </location>
    <ligand>
        <name>thiamine diphosphate</name>
        <dbReference type="ChEBI" id="CHEBI:58937"/>
    </ligand>
</feature>
<feature type="binding site" evidence="1">
    <location>
        <position position="173"/>
    </location>
    <ligand>
        <name>Mg(2+)</name>
        <dbReference type="ChEBI" id="CHEBI:18420"/>
    </ligand>
</feature>
<feature type="binding site" evidence="1">
    <location>
        <position position="173"/>
    </location>
    <ligand>
        <name>thiamine diphosphate</name>
        <dbReference type="ChEBI" id="CHEBI:58937"/>
    </ligand>
</feature>
<feature type="binding site" evidence="1">
    <location>
        <position position="284"/>
    </location>
    <ligand>
        <name>thiamine diphosphate</name>
        <dbReference type="ChEBI" id="CHEBI:58937"/>
    </ligand>
</feature>
<feature type="binding site" evidence="1">
    <location>
        <position position="359"/>
    </location>
    <ligand>
        <name>thiamine diphosphate</name>
        <dbReference type="ChEBI" id="CHEBI:58937"/>
    </ligand>
</feature>
<organism>
    <name type="scientific">Dictyoglomus thermophilum (strain ATCC 35947 / DSM 3960 / H-6-12)</name>
    <dbReference type="NCBI Taxonomy" id="309799"/>
    <lineage>
        <taxon>Bacteria</taxon>
        <taxon>Pseudomonadati</taxon>
        <taxon>Dictyoglomota</taxon>
        <taxon>Dictyoglomia</taxon>
        <taxon>Dictyoglomales</taxon>
        <taxon>Dictyoglomaceae</taxon>
        <taxon>Dictyoglomus</taxon>
    </lineage>
</organism>
<proteinExistence type="inferred from homology"/>
<accession>B5YE06</accession>
<name>DXS_DICT6</name>
<evidence type="ECO:0000255" key="1">
    <source>
        <dbReference type="HAMAP-Rule" id="MF_00315"/>
    </source>
</evidence>